<sequence length="102" mass="11339">MEKTQAQSLLEKLTGNLKDSVTLNVAGVDFTFIRDNAAYDQMLNDIESNNKVTPIKDYLLAIVAREQKEALLEIIHVPTLAAQLAAKVNEVFVPEIQITVKN</sequence>
<accession>P51730</accession>
<proteinExistence type="predicted"/>
<protein>
    <recommendedName>
        <fullName>Uncharacterized 11.3 kDa protein in lys 3'region</fullName>
    </recommendedName>
    <alternativeName>
        <fullName>ORF26</fullName>
    </alternativeName>
</protein>
<name>YO26_BPHC1</name>
<reference key="1">
    <citation type="journal article" date="1984" name="Gene">
        <title>Nucleotide sequence of cloned DNA segments of the Haemophilus influenzae bacteriophage HP1c1.</title>
        <authorList>
            <person name="Benjamin R.C."/>
            <person name="Fitzmaurice W.P."/>
            <person name="Huang P.C."/>
            <person name="Scocca J.J."/>
        </authorList>
    </citation>
    <scope>NUCLEOTIDE SEQUENCE [GENOMIC DNA]</scope>
</reference>
<reference key="2">
    <citation type="journal article" date="1996" name="Nucleic Acids Res.">
        <title>The complete nucleotide sequence of bacteriophage HP1 DNA.</title>
        <authorList>
            <person name="Esposito D."/>
            <person name="Fitzmaurice W.P."/>
            <person name="Benjamin R.C."/>
            <person name="Goodman S.D."/>
            <person name="Waldman A.S."/>
            <person name="Scocca J.J."/>
        </authorList>
    </citation>
    <scope>NUCLEOTIDE SEQUENCE [LARGE SCALE GENOMIC DNA]</scope>
</reference>
<keyword id="KW-1185">Reference proteome</keyword>
<dbReference type="EMBL" id="U24159">
    <property type="protein sequence ID" value="AAB09213.1"/>
    <property type="molecule type" value="Genomic_DNA"/>
</dbReference>
<dbReference type="PIR" id="S69534">
    <property type="entry name" value="S69534"/>
</dbReference>
<dbReference type="RefSeq" id="NP_043497.1">
    <property type="nucleotide sequence ID" value="NC_001697.1"/>
</dbReference>
<dbReference type="SMR" id="P51730"/>
<dbReference type="GeneID" id="1261119"/>
<dbReference type="KEGG" id="vg:1261119"/>
<dbReference type="Proteomes" id="UP000001713">
    <property type="component" value="Segment"/>
</dbReference>
<dbReference type="InterPro" id="IPR024406">
    <property type="entry name" value="TAC-10"/>
</dbReference>
<dbReference type="Pfam" id="PF10963">
    <property type="entry name" value="Phage_TAC_10"/>
    <property type="match status" value="1"/>
</dbReference>
<organismHost>
    <name type="scientific">Haemophilus influenzae</name>
    <dbReference type="NCBI Taxonomy" id="727"/>
</organismHost>
<organism>
    <name type="scientific">Haemophilus phage HP1 (strain HP1c1)</name>
    <name type="common">Bacteriophage HP1</name>
    <dbReference type="NCBI Taxonomy" id="1289570"/>
    <lineage>
        <taxon>Viruses</taxon>
        <taxon>Duplodnaviria</taxon>
        <taxon>Heunggongvirae</taxon>
        <taxon>Uroviricota</taxon>
        <taxon>Caudoviricetes</taxon>
        <taxon>Peduoviridae</taxon>
        <taxon>Hpunavirus</taxon>
        <taxon>Haemophilus phage HP1</taxon>
    </lineage>
</organism>
<feature type="chain" id="PRO_0000165336" description="Uncharacterized 11.3 kDa protein in lys 3'region">
    <location>
        <begin position="1"/>
        <end position="102"/>
    </location>
</feature>